<proteinExistence type="inferred from homology"/>
<dbReference type="EC" id="2.5.1.39" evidence="1"/>
<dbReference type="EMBL" id="CP000082">
    <property type="protein sequence ID" value="AAZ19550.1"/>
    <property type="molecule type" value="Genomic_DNA"/>
</dbReference>
<dbReference type="RefSeq" id="WP_011280964.1">
    <property type="nucleotide sequence ID" value="NC_007204.1"/>
</dbReference>
<dbReference type="SMR" id="Q4FR08"/>
<dbReference type="STRING" id="259536.Psyc_1702"/>
<dbReference type="KEGG" id="par:Psyc_1702"/>
<dbReference type="eggNOG" id="COG0382">
    <property type="taxonomic scope" value="Bacteria"/>
</dbReference>
<dbReference type="HOGENOM" id="CLU_034879_1_0_6"/>
<dbReference type="OrthoDB" id="9782418at2"/>
<dbReference type="UniPathway" id="UPA00232"/>
<dbReference type="Proteomes" id="UP000000546">
    <property type="component" value="Chromosome"/>
</dbReference>
<dbReference type="GO" id="GO:0005886">
    <property type="term" value="C:plasma membrane"/>
    <property type="evidence" value="ECO:0007669"/>
    <property type="project" value="UniProtKB-SubCell"/>
</dbReference>
<dbReference type="GO" id="GO:0008412">
    <property type="term" value="F:4-hydroxybenzoate polyprenyltransferase activity"/>
    <property type="evidence" value="ECO:0007669"/>
    <property type="project" value="UniProtKB-UniRule"/>
</dbReference>
<dbReference type="GO" id="GO:0006744">
    <property type="term" value="P:ubiquinone biosynthetic process"/>
    <property type="evidence" value="ECO:0007669"/>
    <property type="project" value="UniProtKB-UniRule"/>
</dbReference>
<dbReference type="CDD" id="cd13959">
    <property type="entry name" value="PT_UbiA_COQ2"/>
    <property type="match status" value="1"/>
</dbReference>
<dbReference type="FunFam" id="1.10.357.140:FF:000008">
    <property type="entry name" value="4-hydroxybenzoate octaprenyltransferase"/>
    <property type="match status" value="1"/>
</dbReference>
<dbReference type="FunFam" id="1.20.120.1780:FF:000001">
    <property type="entry name" value="4-hydroxybenzoate octaprenyltransferase"/>
    <property type="match status" value="1"/>
</dbReference>
<dbReference type="Gene3D" id="1.10.357.140">
    <property type="entry name" value="UbiA prenyltransferase"/>
    <property type="match status" value="1"/>
</dbReference>
<dbReference type="Gene3D" id="1.20.120.1780">
    <property type="entry name" value="UbiA prenyltransferase"/>
    <property type="match status" value="1"/>
</dbReference>
<dbReference type="HAMAP" id="MF_01635">
    <property type="entry name" value="UbiA"/>
    <property type="match status" value="1"/>
</dbReference>
<dbReference type="InterPro" id="IPR006370">
    <property type="entry name" value="HB_polyprenyltransferase-like"/>
</dbReference>
<dbReference type="InterPro" id="IPR039653">
    <property type="entry name" value="Prenyltransferase"/>
</dbReference>
<dbReference type="InterPro" id="IPR000537">
    <property type="entry name" value="UbiA_prenyltransferase"/>
</dbReference>
<dbReference type="InterPro" id="IPR044878">
    <property type="entry name" value="UbiA_sf"/>
</dbReference>
<dbReference type="NCBIfam" id="TIGR01474">
    <property type="entry name" value="ubiA_proteo"/>
    <property type="match status" value="1"/>
</dbReference>
<dbReference type="PANTHER" id="PTHR11048:SF28">
    <property type="entry name" value="4-HYDROXYBENZOATE POLYPRENYLTRANSFERASE, MITOCHONDRIAL"/>
    <property type="match status" value="1"/>
</dbReference>
<dbReference type="PANTHER" id="PTHR11048">
    <property type="entry name" value="PRENYLTRANSFERASES"/>
    <property type="match status" value="1"/>
</dbReference>
<dbReference type="Pfam" id="PF01040">
    <property type="entry name" value="UbiA"/>
    <property type="match status" value="1"/>
</dbReference>
<organism>
    <name type="scientific">Psychrobacter arcticus (strain DSM 17307 / VKM B-2377 / 273-4)</name>
    <dbReference type="NCBI Taxonomy" id="259536"/>
    <lineage>
        <taxon>Bacteria</taxon>
        <taxon>Pseudomonadati</taxon>
        <taxon>Pseudomonadota</taxon>
        <taxon>Gammaproteobacteria</taxon>
        <taxon>Moraxellales</taxon>
        <taxon>Moraxellaceae</taxon>
        <taxon>Psychrobacter</taxon>
    </lineage>
</organism>
<sequence length="307" mass="33908">MTFNDKLQAYIQLTRFDKPVGIELLLWPTLWGVLFAAMGQAQQQGEGVTAGLPSLSIFVVFALGAILMRAAGCAINDFADRKVDGHVSRTKGRPLADGRLSAKEAIAAFLVLVLLSASLLLFLPIQVFYWSFAAVILAFIYPFMKRYTHLPQVFLAAAFGWAIPMAYVAIQGAADIWCWLLFLAYMCWTVAYDTQYAMADRDDDVKIGVKSTAILFGRYDVIIISLLQILFLVIMGAVMWHYFVPTSLGITPVFGLALVAMMFAKQNSACASRNALACFQAFLANIWVGRYVFALIAIACVWTTFNG</sequence>
<protein>
    <recommendedName>
        <fullName evidence="1">4-hydroxybenzoate octaprenyltransferase</fullName>
        <ecNumber evidence="1">2.5.1.39</ecNumber>
    </recommendedName>
    <alternativeName>
        <fullName evidence="1">4-HB polyprenyltransferase</fullName>
    </alternativeName>
</protein>
<keyword id="KW-0997">Cell inner membrane</keyword>
<keyword id="KW-1003">Cell membrane</keyword>
<keyword id="KW-0460">Magnesium</keyword>
<keyword id="KW-0472">Membrane</keyword>
<keyword id="KW-1185">Reference proteome</keyword>
<keyword id="KW-0808">Transferase</keyword>
<keyword id="KW-0812">Transmembrane</keyword>
<keyword id="KW-1133">Transmembrane helix</keyword>
<keyword id="KW-0831">Ubiquinone biosynthesis</keyword>
<accession>Q4FR08</accession>
<reference key="1">
    <citation type="journal article" date="2010" name="Appl. Environ. Microbiol.">
        <title>The genome sequence of Psychrobacter arcticus 273-4, a psychroactive Siberian permafrost bacterium, reveals mechanisms for adaptation to low-temperature growth.</title>
        <authorList>
            <person name="Ayala-del-Rio H.L."/>
            <person name="Chain P.S."/>
            <person name="Grzymski J.J."/>
            <person name="Ponder M.A."/>
            <person name="Ivanova N."/>
            <person name="Bergholz P.W."/>
            <person name="Di Bartolo G."/>
            <person name="Hauser L."/>
            <person name="Land M."/>
            <person name="Bakermans C."/>
            <person name="Rodrigues D."/>
            <person name="Klappenbach J."/>
            <person name="Zarka D."/>
            <person name="Larimer F."/>
            <person name="Richardson P."/>
            <person name="Murray A."/>
            <person name="Thomashow M."/>
            <person name="Tiedje J.M."/>
        </authorList>
    </citation>
    <scope>NUCLEOTIDE SEQUENCE [LARGE SCALE GENOMIC DNA]</scope>
    <source>
        <strain>DSM 17307 / VKM B-2377 / 273-4</strain>
    </source>
</reference>
<comment type="function">
    <text evidence="1">Catalyzes the prenylation of para-hydroxybenzoate (PHB) with an all-trans polyprenyl group. Mediates the second step in the final reaction sequence of ubiquinone-8 (UQ-8) biosynthesis, which is the condensation of the polyisoprenoid side chain with PHB, generating the first membrane-bound Q intermediate 3-octaprenyl-4-hydroxybenzoate.</text>
</comment>
<comment type="catalytic activity">
    <reaction evidence="1">
        <text>all-trans-octaprenyl diphosphate + 4-hydroxybenzoate = 4-hydroxy-3-(all-trans-octaprenyl)benzoate + diphosphate</text>
        <dbReference type="Rhea" id="RHEA:27782"/>
        <dbReference type="ChEBI" id="CHEBI:1617"/>
        <dbReference type="ChEBI" id="CHEBI:17879"/>
        <dbReference type="ChEBI" id="CHEBI:33019"/>
        <dbReference type="ChEBI" id="CHEBI:57711"/>
        <dbReference type="EC" id="2.5.1.39"/>
    </reaction>
</comment>
<comment type="cofactor">
    <cofactor evidence="1">
        <name>Mg(2+)</name>
        <dbReference type="ChEBI" id="CHEBI:18420"/>
    </cofactor>
</comment>
<comment type="pathway">
    <text evidence="1">Cofactor biosynthesis; ubiquinone biosynthesis.</text>
</comment>
<comment type="subcellular location">
    <subcellularLocation>
        <location evidence="1">Cell inner membrane</location>
        <topology evidence="1">Multi-pass membrane protein</topology>
    </subcellularLocation>
</comment>
<comment type="similarity">
    <text evidence="1">Belongs to the UbiA prenyltransferase family.</text>
</comment>
<feature type="chain" id="PRO_0000262826" description="4-hydroxybenzoate octaprenyltransferase">
    <location>
        <begin position="1"/>
        <end position="307"/>
    </location>
</feature>
<feature type="transmembrane region" description="Helical" evidence="1">
    <location>
        <begin position="19"/>
        <end position="39"/>
    </location>
</feature>
<feature type="transmembrane region" description="Helical" evidence="1">
    <location>
        <begin position="48"/>
        <end position="68"/>
    </location>
</feature>
<feature type="transmembrane region" description="Helical" evidence="1">
    <location>
        <begin position="105"/>
        <end position="125"/>
    </location>
</feature>
<feature type="transmembrane region" description="Helical" evidence="1">
    <location>
        <begin position="127"/>
        <end position="147"/>
    </location>
</feature>
<feature type="transmembrane region" description="Helical" evidence="1">
    <location>
        <begin position="150"/>
        <end position="170"/>
    </location>
</feature>
<feature type="transmembrane region" description="Helical" evidence="1">
    <location>
        <begin position="172"/>
        <end position="192"/>
    </location>
</feature>
<feature type="transmembrane region" description="Helical" evidence="1">
    <location>
        <begin position="221"/>
        <end position="241"/>
    </location>
</feature>
<feature type="transmembrane region" description="Helical" evidence="1">
    <location>
        <begin position="243"/>
        <end position="263"/>
    </location>
</feature>
<feature type="transmembrane region" description="Helical" evidence="1">
    <location>
        <begin position="282"/>
        <end position="302"/>
    </location>
</feature>
<name>UBIA_PSYA2</name>
<evidence type="ECO:0000255" key="1">
    <source>
        <dbReference type="HAMAP-Rule" id="MF_01635"/>
    </source>
</evidence>
<gene>
    <name evidence="1" type="primary">ubiA</name>
    <name type="ordered locus">Psyc_1702</name>
</gene>